<organism>
    <name type="scientific">Epstein-Barr virus (strain AG876)</name>
    <name type="common">HHV-4</name>
    <name type="synonym">Human herpesvirus 4</name>
    <dbReference type="NCBI Taxonomy" id="82830"/>
    <lineage>
        <taxon>Viruses</taxon>
        <taxon>Duplodnaviria</taxon>
        <taxon>Heunggongvirae</taxon>
        <taxon>Peploviricota</taxon>
        <taxon>Herviviricetes</taxon>
        <taxon>Herpesvirales</taxon>
        <taxon>Orthoherpesviridae</taxon>
        <taxon>Gammaherpesvirinae</taxon>
        <taxon>Lymphocryptovirus</taxon>
        <taxon>Lymphocryptovirus humangamma4</taxon>
        <taxon>Epstein-Barr virus (strain GD1)</taxon>
    </lineage>
</organism>
<name>BRRF1_EBVA8</name>
<reference key="1">
    <citation type="journal article" date="2006" name="Virology">
        <title>The genome of Epstein-Barr virus type 2 strain AG876.</title>
        <authorList>
            <person name="Dolan A."/>
            <person name="Addison C."/>
            <person name="Gatherer D."/>
            <person name="Davison A.J."/>
            <person name="McGeoch D.J."/>
        </authorList>
    </citation>
    <scope>NUCLEOTIDE SEQUENCE [LARGE SCALE GENOMIC DNA]</scope>
</reference>
<comment type="function">
    <text evidence="1">Enhances the ability of BRLF1 to induce lytic infection by cooperating with it to transcriptionally activate the BZLF1 promoter.</text>
</comment>
<comment type="similarity">
    <text evidence="2">Belongs to the lymphocryptovirus BBRF1 family.</text>
</comment>
<organismHost>
    <name type="scientific">Homo sapiens</name>
    <name type="common">Human</name>
    <dbReference type="NCBI Taxonomy" id="9606"/>
</organismHost>
<sequence length="310" mass="35319">MASSNRGNARPLKSFLHELYLKHYPEVGDVVHLLNTIGVDCDLPPSHPLLTAQRGLFLARVLQAVQQHKLLEDTIVPKILKKLAYFLELLSYYSPKDEQRDIAEVLDHLKTNRDLGLDDRLWALIRKLRQDRHHASVNVLMPGSDYTAVSLQYYDGISIGMRKVIADVCRSGYASMPSMTATHNLSHQLLMASGPSEEPCAWRGFFNQVLLWTVALCKFRRCIYYNYIQGSIATISQLLHLEIKALCSWIISQDGMRLFQHSRPLLTLWESVAANQEVTDAITLPDCAEYIDLLKHTKHVLENCSAMQYK</sequence>
<gene>
    <name type="ORF">BRRF1</name>
</gene>
<dbReference type="EMBL" id="DQ279927">
    <property type="protein sequence ID" value="ABB89249.1"/>
    <property type="molecule type" value="Genomic_DNA"/>
</dbReference>
<dbReference type="RefSeq" id="YP_001129469.1">
    <property type="nucleotide sequence ID" value="NC_009334.1"/>
</dbReference>
<dbReference type="RefSeq" id="YP_401675.1">
    <property type="nucleotide sequence ID" value="NC_007605.1"/>
</dbReference>
<dbReference type="SMR" id="P0C723"/>
<dbReference type="DNASU" id="3783728"/>
<dbReference type="GeneID" id="3783728"/>
<dbReference type="KEGG" id="vg:3783728"/>
<dbReference type="KEGG" id="vg:5176203"/>
<dbReference type="Proteomes" id="UP000007639">
    <property type="component" value="Genome"/>
</dbReference>
<dbReference type="InterPro" id="IPR006878">
    <property type="entry name" value="Herpes_BBRF1"/>
</dbReference>
<dbReference type="Pfam" id="PF04793">
    <property type="entry name" value="Herpes_BBRF1"/>
    <property type="match status" value="1"/>
</dbReference>
<protein>
    <recommendedName>
        <fullName>Transcriptional activator BRRF1</fullName>
    </recommendedName>
</protein>
<accession>P0C723</accession>
<accession>Q777E3</accession>
<feature type="chain" id="PRO_0000382439" description="Transcriptional activator BRRF1">
    <location>
        <begin position="1"/>
        <end position="310"/>
    </location>
</feature>
<evidence type="ECO:0000250" key="1"/>
<evidence type="ECO:0000305" key="2"/>
<keyword id="KW-0244">Early protein</keyword>
<keyword id="KW-1185">Reference proteome</keyword>
<keyword id="KW-0804">Transcription</keyword>
<keyword id="KW-0805">Transcription regulation</keyword>
<proteinExistence type="inferred from homology"/>